<organism>
    <name type="scientific">Pinctada fucata</name>
    <name type="common">Akoya pearl oyster</name>
    <name type="synonym">Pinctada imbricata fucata</name>
    <dbReference type="NCBI Taxonomy" id="50426"/>
    <lineage>
        <taxon>Eukaryota</taxon>
        <taxon>Metazoa</taxon>
        <taxon>Spiralia</taxon>
        <taxon>Lophotrochozoa</taxon>
        <taxon>Mollusca</taxon>
        <taxon>Bivalvia</taxon>
        <taxon>Autobranchia</taxon>
        <taxon>Pteriomorphia</taxon>
        <taxon>Pterioida</taxon>
        <taxon>Pterioidea</taxon>
        <taxon>Pteriidae</taxon>
        <taxon>Pinctada</taxon>
    </lineage>
</organism>
<keyword id="KW-0106">Calcium</keyword>
<keyword id="KW-0903">Direct protein sequencing</keyword>
<keyword id="KW-1015">Disulfide bond</keyword>
<keyword id="KW-0272">Extracellular matrix</keyword>
<keyword id="KW-0325">Glycoprotein</keyword>
<keyword id="KW-0456">Lyase</keyword>
<keyword id="KW-0479">Metal-binding</keyword>
<keyword id="KW-0677">Repeat</keyword>
<keyword id="KW-0964">Secreted</keyword>
<keyword id="KW-0732">Signal</keyword>
<keyword id="KW-0862">Zinc</keyword>
<accession>Q27908</accession>
<proteinExistence type="evidence at protein level"/>
<sequence length="447" mass="50114">MYLHLTALCVVIPLCYGASMFKHDHYMDNGVRYPNGDGICKQLNETKCDAGFSYDRSICEGPHYWHTISKCFIACGIGQRQSPINIVSYDAKFRQRLPKLKFKPHMEKLKTEVTNHQNRAPEFEPEDGENLYVKLNNLVDGHYKFHNLHVHNGRTRRKGSEHSVNGRFTPMEAHLVFHHDDQTHFEPTRTKLGGAFPGHNDFVVVGVFLEVGDDGFGDEPDDEECKHILKGHHPDNNENGNGDNGNNGYNGDNGNNGDNGNNSYNGDNGNNGVNGNNGYNGDNGNNGDNGNNGYNGDNGNNGDNGNNGENGNNGENGNNGENGHKHGCRVKKAKHLSRILECAYRNDKVREFKKVGEEEGLDVHLTPEMALPPLKYRHYYTYEGSLTTPPCTESVLWVVQKCHVQVSRRVLHALRNVEGYKDGTTLRKYGTRRPTQKNKVTVYKSFK</sequence>
<evidence type="ECO:0000250" key="1"/>
<evidence type="ECO:0000255" key="2"/>
<evidence type="ECO:0000255" key="3">
    <source>
        <dbReference type="PROSITE-ProRule" id="PRU01134"/>
    </source>
</evidence>
<evidence type="ECO:0000256" key="4">
    <source>
        <dbReference type="SAM" id="MobiDB-lite"/>
    </source>
</evidence>
<evidence type="ECO:0000269" key="5">
    <source>
    </source>
</evidence>
<evidence type="ECO:0000269" key="6">
    <source>
    </source>
</evidence>
<evidence type="ECO:0000269" key="7">
    <source>
    </source>
</evidence>
<evidence type="ECO:0000305" key="8"/>
<feature type="signal peptide" evidence="7">
    <location>
        <begin position="1"/>
        <end position="17"/>
    </location>
</feature>
<feature type="chain" id="PRO_0000379792" description="Nacrein">
    <location>
        <begin position="18"/>
        <end position="447"/>
    </location>
</feature>
<feature type="domain" description="Alpha-carbonic anhydrase" evidence="3">
    <location>
        <begin position="50"/>
        <end position="446"/>
    </location>
</feature>
<feature type="repeat" description="1">
    <location>
        <begin position="242"/>
        <end position="244"/>
    </location>
</feature>
<feature type="repeat" description="2">
    <location>
        <begin position="245"/>
        <end position="247"/>
    </location>
</feature>
<feature type="repeat" description="3">
    <location>
        <begin position="248"/>
        <end position="250"/>
    </location>
</feature>
<feature type="repeat" description="4">
    <location>
        <begin position="251"/>
        <end position="253"/>
    </location>
</feature>
<feature type="repeat" description="5">
    <location>
        <begin position="254"/>
        <end position="256"/>
    </location>
</feature>
<feature type="repeat" description="6">
    <location>
        <begin position="257"/>
        <end position="259"/>
    </location>
</feature>
<feature type="repeat" description="7">
    <location>
        <begin position="260"/>
        <end position="262"/>
    </location>
</feature>
<feature type="repeat" description="8">
    <location>
        <begin position="263"/>
        <end position="265"/>
    </location>
</feature>
<feature type="repeat" description="9">
    <location>
        <begin position="266"/>
        <end position="268"/>
    </location>
</feature>
<feature type="repeat" description="10">
    <location>
        <begin position="269"/>
        <end position="271"/>
    </location>
</feature>
<feature type="repeat" description="11">
    <location>
        <begin position="272"/>
        <end position="274"/>
    </location>
</feature>
<feature type="repeat" description="12">
    <location>
        <begin position="275"/>
        <end position="277"/>
    </location>
</feature>
<feature type="repeat" description="13">
    <location>
        <begin position="278"/>
        <end position="280"/>
    </location>
</feature>
<feature type="repeat" description="14">
    <location>
        <begin position="281"/>
        <end position="283"/>
    </location>
</feature>
<feature type="repeat" description="15">
    <location>
        <begin position="284"/>
        <end position="286"/>
    </location>
</feature>
<feature type="repeat" description="16">
    <location>
        <begin position="287"/>
        <end position="289"/>
    </location>
</feature>
<feature type="repeat" description="17">
    <location>
        <begin position="290"/>
        <end position="292"/>
    </location>
</feature>
<feature type="repeat" description="18">
    <location>
        <begin position="293"/>
        <end position="295"/>
    </location>
</feature>
<feature type="repeat" description="19">
    <location>
        <begin position="296"/>
        <end position="298"/>
    </location>
</feature>
<feature type="repeat" description="20">
    <location>
        <begin position="299"/>
        <end position="301"/>
    </location>
</feature>
<feature type="repeat" description="21">
    <location>
        <begin position="302"/>
        <end position="304"/>
    </location>
</feature>
<feature type="repeat" description="22">
    <location>
        <begin position="305"/>
        <end position="307"/>
    </location>
</feature>
<feature type="repeat" description="23">
    <location>
        <begin position="308"/>
        <end position="310"/>
    </location>
</feature>
<feature type="repeat" description="24">
    <location>
        <begin position="311"/>
        <end position="313"/>
    </location>
</feature>
<feature type="repeat" description="25">
    <location>
        <begin position="314"/>
        <end position="316"/>
    </location>
</feature>
<feature type="repeat" description="26">
    <location>
        <begin position="317"/>
        <end position="318"/>
    </location>
</feature>
<feature type="repeat" description="27">
    <location>
        <begin position="320"/>
        <end position="322"/>
    </location>
</feature>
<feature type="region of interest" description="Disordered" evidence="4">
    <location>
        <begin position="218"/>
        <end position="329"/>
    </location>
</feature>
<feature type="region of interest" description="27 X 3 AA approximate tandem repeats of G-X-N">
    <location>
        <begin position="242"/>
        <end position="322"/>
    </location>
</feature>
<feature type="compositionally biased region" description="Basic and acidic residues" evidence="4">
    <location>
        <begin position="224"/>
        <end position="236"/>
    </location>
</feature>
<feature type="compositionally biased region" description="Low complexity" evidence="4">
    <location>
        <begin position="237"/>
        <end position="321"/>
    </location>
</feature>
<feature type="binding site" evidence="3">
    <location>
        <position position="149"/>
    </location>
    <ligand>
        <name>Zn(2+)</name>
        <dbReference type="ChEBI" id="CHEBI:29105"/>
        <note>catalytic</note>
    </ligand>
</feature>
<feature type="binding site" evidence="3">
    <location>
        <position position="151"/>
    </location>
    <ligand>
        <name>Zn(2+)</name>
        <dbReference type="ChEBI" id="CHEBI:29105"/>
        <note>catalytic</note>
    </ligand>
</feature>
<feature type="binding site" evidence="3">
    <location>
        <position position="174"/>
    </location>
    <ligand>
        <name>Zn(2+)</name>
        <dbReference type="ChEBI" id="CHEBI:29105"/>
        <note>catalytic</note>
    </ligand>
</feature>
<feature type="binding site" evidence="1">
    <location>
        <begin position="387"/>
        <end position="388"/>
    </location>
    <ligand>
        <name>substrate</name>
    </ligand>
</feature>
<feature type="glycosylation site" description="N-linked (GlcNAc...) asparagine" evidence="2">
    <location>
        <position position="44"/>
    </location>
</feature>
<feature type="glycosylation site" description="N-linked (GlcNAc...) asparagine" evidence="2">
    <location>
        <position position="261"/>
    </location>
</feature>
<reference key="1">
    <citation type="journal article" date="1996" name="Proc. Natl. Acad. Sci. U.S.A.">
        <title>A carbonic anhydrase from the nacreous layer in oyster pearls.</title>
        <authorList>
            <person name="Miyamoto H."/>
            <person name="Miyashita T."/>
            <person name="Okushima M."/>
            <person name="Nakano S."/>
            <person name="Morita T."/>
            <person name="Matsushiro A."/>
        </authorList>
    </citation>
    <scope>NUCLEOTIDE SEQUENCE [MRNA]</scope>
    <scope>PROTEIN SEQUENCE OF 18-32</scope>
    <scope>FUNCTION</scope>
    <scope>CATALYTIC ACTIVITY</scope>
    <scope>SUBCELLULAR LOCATION</scope>
    <scope>TISSUE SPECIFICITY</scope>
    <scope>DOMAIN</scope>
    <source>
        <tissue>Mantle</tissue>
        <tissue>Nacre</tissue>
    </source>
</reference>
<reference key="2">
    <citation type="journal article" date="2008" name="Mar. Biotechnol.">
        <title>Isolation and characterization of the N-linked oligosaccharides in nacrein from Pinctada fucata.</title>
        <authorList>
            <person name="Takakura D."/>
            <person name="Norizuki M."/>
            <person name="Ishikawa F."/>
            <person name="Samata T."/>
        </authorList>
    </citation>
    <scope>GLYCOSYLATION</scope>
</reference>
<reference key="3">
    <citation type="journal article" date="2005" name="Zool. Sci.">
        <title>The carbonic anhydrase domain protein nacrein is expressed in the epithelial cells of the mantle and acts as a negative regulator in calcification in the mollusc Pinctada fucata.</title>
        <authorList>
            <person name="Miyamoto H."/>
            <person name="Miyoshi F."/>
            <person name="Kohno J."/>
        </authorList>
    </citation>
    <scope>FUNCTION</scope>
    <scope>TISSUE SPECIFICITY</scope>
    <source>
        <tissue>Mantle</tissue>
        <tissue>Shell</tissue>
    </source>
</reference>
<protein>
    <recommendedName>
        <fullName>Nacrein</fullName>
        <ecNumber>4.2.1.1</ecNumber>
    </recommendedName>
</protein>
<dbReference type="EC" id="4.2.1.1"/>
<dbReference type="EMBL" id="D83523">
    <property type="protein sequence ID" value="BAA11940.1"/>
    <property type="molecule type" value="mRNA"/>
</dbReference>
<dbReference type="SMR" id="Q27908"/>
<dbReference type="GO" id="GO:0005737">
    <property type="term" value="C:cytoplasm"/>
    <property type="evidence" value="ECO:0007669"/>
    <property type="project" value="TreeGrafter"/>
</dbReference>
<dbReference type="GO" id="GO:0005576">
    <property type="term" value="C:extracellular region"/>
    <property type="evidence" value="ECO:0007669"/>
    <property type="project" value="UniProtKB-KW"/>
</dbReference>
<dbReference type="GO" id="GO:0004089">
    <property type="term" value="F:carbonate dehydratase activity"/>
    <property type="evidence" value="ECO:0007669"/>
    <property type="project" value="UniProtKB-EC"/>
</dbReference>
<dbReference type="GO" id="GO:0008270">
    <property type="term" value="F:zinc ion binding"/>
    <property type="evidence" value="ECO:0007669"/>
    <property type="project" value="InterPro"/>
</dbReference>
<dbReference type="CDD" id="cd03124">
    <property type="entry name" value="alpha_CA_prokaryotic_like"/>
    <property type="match status" value="1"/>
</dbReference>
<dbReference type="Gene3D" id="3.10.200.10">
    <property type="entry name" value="Alpha carbonic anhydrase"/>
    <property type="match status" value="2"/>
</dbReference>
<dbReference type="InterPro" id="IPR041891">
    <property type="entry name" value="Alpha_CA_prokaryot-like"/>
</dbReference>
<dbReference type="InterPro" id="IPR001148">
    <property type="entry name" value="CA_dom"/>
</dbReference>
<dbReference type="InterPro" id="IPR036398">
    <property type="entry name" value="CA_dom_sf"/>
</dbReference>
<dbReference type="InterPro" id="IPR023561">
    <property type="entry name" value="Carbonic_anhydrase_a-class"/>
</dbReference>
<dbReference type="InterPro" id="IPR008160">
    <property type="entry name" value="Collagen"/>
</dbReference>
<dbReference type="PANTHER" id="PTHR18952">
    <property type="entry name" value="CARBONIC ANHYDRASE"/>
    <property type="match status" value="1"/>
</dbReference>
<dbReference type="PANTHER" id="PTHR18952:SF141">
    <property type="entry name" value="CARBONIC ANHYDRASE"/>
    <property type="match status" value="1"/>
</dbReference>
<dbReference type="Pfam" id="PF00194">
    <property type="entry name" value="Carb_anhydrase"/>
    <property type="match status" value="2"/>
</dbReference>
<dbReference type="Pfam" id="PF01391">
    <property type="entry name" value="Collagen"/>
    <property type="match status" value="2"/>
</dbReference>
<dbReference type="SMART" id="SM01057">
    <property type="entry name" value="Carb_anhydrase"/>
    <property type="match status" value="1"/>
</dbReference>
<dbReference type="SUPFAM" id="SSF51069">
    <property type="entry name" value="Carbonic anhydrase"/>
    <property type="match status" value="1"/>
</dbReference>
<dbReference type="PROSITE" id="PS51144">
    <property type="entry name" value="ALPHA_CA_2"/>
    <property type="match status" value="1"/>
</dbReference>
<name>MANA_PINFU</name>
<comment type="function">
    <text evidence="5 7">Acts as a negative regulator for calcification in the shells of mollusks. May function both as a calcium concentrator and as a carbonic anhydrase required for production of carbonate ions, which are assembled to CaCO(3) at mineralization sites. Is important for shell formation in both the calcitic prismatic layer and the aragonitic nacreous layer.</text>
</comment>
<comment type="catalytic activity">
    <reaction evidence="7">
        <text>hydrogencarbonate + H(+) = CO2 + H2O</text>
        <dbReference type="Rhea" id="RHEA:10748"/>
        <dbReference type="ChEBI" id="CHEBI:15377"/>
        <dbReference type="ChEBI" id="CHEBI:15378"/>
        <dbReference type="ChEBI" id="CHEBI:16526"/>
        <dbReference type="ChEBI" id="CHEBI:17544"/>
        <dbReference type="EC" id="4.2.1.1"/>
    </reaction>
</comment>
<comment type="cofactor">
    <cofactor evidence="1">
        <name>Zn(2+)</name>
        <dbReference type="ChEBI" id="CHEBI:29105"/>
    </cofactor>
</comment>
<comment type="subunit">
    <text>Homooligomer; disulfide-linked. May also be disulfide-linked to insoluble organic matrix.</text>
</comment>
<comment type="subcellular location">
    <subcellularLocation>
        <location evidence="7">Secreted</location>
        <location evidence="7">Extracellular space</location>
        <location evidence="7">Extracellular matrix</location>
    </subcellularLocation>
</comment>
<comment type="tissue specificity">
    <text evidence="5 7">Expressed at whole regions of the mantle epithelium tissue. Is found in the aragonitic nacreous and calcitic prismatic and foliated layers.</text>
</comment>
<comment type="PTM">
    <text evidence="6">N-glycosylated.</text>
</comment>
<comment type="miscellaneous">
    <text>Two hypotheses for calcium binding are proposed. Either the Gly-Xaa-Asn repeat domain bind calcium or sulfite and sialic acid provide the necessary negative charge in the N-glycan to promote calcium uptake.</text>
</comment>
<comment type="similarity">
    <text evidence="8">Belongs to the alpha-carbonic anhydrase family.</text>
</comment>